<name>PEPA_ASPNG</name>
<protein>
    <recommendedName>
        <fullName evidence="7">Aspergillopepsin-1</fullName>
        <ecNumber evidence="1">3.4.23.18</ecNumber>
    </recommendedName>
    <alternativeName>
        <fullName>Aspartic protease pepA</fullName>
    </alternativeName>
    <alternativeName>
        <fullName>Aspergillopepsin I</fullName>
    </alternativeName>
    <alternativeName>
        <fullName>Aspergillopeptidase A</fullName>
    </alternativeName>
    <alternativeName>
        <fullName evidence="5">Proctase B</fullName>
    </alternativeName>
</protein>
<gene>
    <name evidence="6" type="primary">pepA</name>
    <name evidence="5" type="synonym">prtB</name>
</gene>
<evidence type="ECO:0000250" key="1">
    <source>
        <dbReference type="UniProtKB" id="Q12567"/>
    </source>
</evidence>
<evidence type="ECO:0000255" key="2"/>
<evidence type="ECO:0000255" key="3">
    <source>
        <dbReference type="PROSITE-ProRule" id="PRU01103"/>
    </source>
</evidence>
<evidence type="ECO:0000269" key="4">
    <source>
    </source>
</evidence>
<evidence type="ECO:0000303" key="5">
    <source>
    </source>
</evidence>
<evidence type="ECO:0000303" key="6">
    <source ref="1"/>
</evidence>
<evidence type="ECO:0000305" key="7"/>
<sequence>MVVFSKTAALVLGLSTAVSAAPAPTRKGFTINQIARPANKTRTVNLPGLYARSLAKFGGTVPQSVKEAASKGSAVTTPQNNDEEYLTPVTVGKSTLHLDFDTGSADLWGFSDELPSSEQTGHDLYTPSSSATKLSGYSWDISYGDGSSASGDVYRDTVTVGGVTTNKQAVEAASKISSEFVQDTANDGLLGLAFSSINTVQPKAQTTFFDTVKSQLDSPLFAVQLKHDAPGVYDFGYIDDSKYTGSITYTDADSSQGYWGFSTDGYSIGDGSSSSSGFSAIADTGTTLILLDDEIVSAHYEQVSGAQESYEAGGYVFSCSTDLPDFTVVIGDYKAVVPGKYINYAPVSTGSSTCYGGIQSNSGLGLSILGDVFLKSQYVVFNSEGPKLGFAAQA</sequence>
<keyword id="KW-0064">Aspartyl protease</keyword>
<keyword id="KW-0903">Direct protein sequencing</keyword>
<keyword id="KW-1015">Disulfide bond</keyword>
<keyword id="KW-0378">Hydrolase</keyword>
<keyword id="KW-0645">Protease</keyword>
<keyword id="KW-0964">Secreted</keyword>
<keyword id="KW-0732">Signal</keyword>
<keyword id="KW-0865">Zymogen</keyword>
<reference key="1">
    <citation type="submission" date="1995-03" db="EMBL/GenBank/DDBJ databases">
        <title>Nucleotide sequence of the pepA gene from Aspergillus niger.</title>
        <authorList>
            <person name="Shirai H."/>
        </authorList>
    </citation>
    <scope>NUCLEOTIDE SEQUENCE [GENOMIC DNA / MRNA]</scope>
    <source>
        <strain>WU-2223L</strain>
    </source>
</reference>
<reference key="2">
    <citation type="journal article" date="1995" name="Biosci. Biotechnol. Biochem.">
        <title>Molecular cloning of a cDNA for proctase B from Aspergillus niger var. macrosporus and sequence comparison with other aspergillopepsins I.</title>
        <authorList>
            <person name="Lu J.F."/>
            <person name="Inoue H."/>
            <person name="Kimura T."/>
            <person name="Makabe O."/>
            <person name="Takahashi K."/>
        </authorList>
    </citation>
    <scope>NUCLEOTIDE SEQUENCE [MRNA]</scope>
    <scope>PROTEIN SEQUENCE OF 70-87; 94-117; 227-242 AND 377-381</scope>
</reference>
<accession>P55325</accession>
<accession>Q00207</accession>
<accession>Q12371</accession>
<dbReference type="EC" id="3.4.23.18" evidence="1"/>
<dbReference type="EMBL" id="D49839">
    <property type="protein sequence ID" value="BAA08640.1"/>
    <property type="molecule type" value="Genomic_DNA"/>
</dbReference>
<dbReference type="EMBL" id="D49838">
    <property type="protein sequence ID" value="BAA08639.1"/>
    <property type="molecule type" value="mRNA"/>
</dbReference>
<dbReference type="EMBL" id="D45177">
    <property type="protein sequence ID" value="BAA08123.1"/>
    <property type="molecule type" value="mRNA"/>
</dbReference>
<dbReference type="SMR" id="P55325"/>
<dbReference type="MEROPS" id="A01.016"/>
<dbReference type="PaxDb" id="5061-CADANGAP00011185"/>
<dbReference type="VEuPathDB" id="FungiDB:An14g04710"/>
<dbReference type="VEuPathDB" id="FungiDB:ASPNIDRAFT2_1141688"/>
<dbReference type="VEuPathDB" id="FungiDB:ATCC64974_3930"/>
<dbReference type="VEuPathDB" id="FungiDB:M747DRAFT_2667"/>
<dbReference type="eggNOG" id="KOG1339">
    <property type="taxonomic scope" value="Eukaryota"/>
</dbReference>
<dbReference type="GO" id="GO:0005576">
    <property type="term" value="C:extracellular region"/>
    <property type="evidence" value="ECO:0007669"/>
    <property type="project" value="UniProtKB-SubCell"/>
</dbReference>
<dbReference type="GO" id="GO:0004190">
    <property type="term" value="F:aspartic-type endopeptidase activity"/>
    <property type="evidence" value="ECO:0007669"/>
    <property type="project" value="UniProtKB-KW"/>
</dbReference>
<dbReference type="GO" id="GO:0006508">
    <property type="term" value="P:proteolysis"/>
    <property type="evidence" value="ECO:0007669"/>
    <property type="project" value="UniProtKB-KW"/>
</dbReference>
<dbReference type="CDD" id="cd06097">
    <property type="entry name" value="Aspergillopepsin_like"/>
    <property type="match status" value="1"/>
</dbReference>
<dbReference type="FunFam" id="2.40.70.10:FF:000024">
    <property type="entry name" value="Endothiapepsin"/>
    <property type="match status" value="1"/>
</dbReference>
<dbReference type="FunFam" id="2.40.70.10:FF:000026">
    <property type="entry name" value="Endothiapepsin"/>
    <property type="match status" value="1"/>
</dbReference>
<dbReference type="Gene3D" id="2.40.70.10">
    <property type="entry name" value="Acid Proteases"/>
    <property type="match status" value="2"/>
</dbReference>
<dbReference type="InterPro" id="IPR001461">
    <property type="entry name" value="Aspartic_peptidase_A1"/>
</dbReference>
<dbReference type="InterPro" id="IPR001969">
    <property type="entry name" value="Aspartic_peptidase_AS"/>
</dbReference>
<dbReference type="InterPro" id="IPR034163">
    <property type="entry name" value="Aspergillopepsin-like_cat_dom"/>
</dbReference>
<dbReference type="InterPro" id="IPR033121">
    <property type="entry name" value="PEPTIDASE_A1"/>
</dbReference>
<dbReference type="InterPro" id="IPR021109">
    <property type="entry name" value="Peptidase_aspartic_dom_sf"/>
</dbReference>
<dbReference type="PANTHER" id="PTHR47966:SF2">
    <property type="entry name" value="ASPERGILLOPEPSIN-1-RELATED"/>
    <property type="match status" value="1"/>
</dbReference>
<dbReference type="PANTHER" id="PTHR47966">
    <property type="entry name" value="BETA-SITE APP-CLEAVING ENZYME, ISOFORM A-RELATED"/>
    <property type="match status" value="1"/>
</dbReference>
<dbReference type="Pfam" id="PF00026">
    <property type="entry name" value="Asp"/>
    <property type="match status" value="1"/>
</dbReference>
<dbReference type="PRINTS" id="PR00792">
    <property type="entry name" value="PEPSIN"/>
</dbReference>
<dbReference type="SUPFAM" id="SSF50630">
    <property type="entry name" value="Acid proteases"/>
    <property type="match status" value="1"/>
</dbReference>
<dbReference type="PROSITE" id="PS00141">
    <property type="entry name" value="ASP_PROTEASE"/>
    <property type="match status" value="2"/>
</dbReference>
<dbReference type="PROSITE" id="PS51767">
    <property type="entry name" value="PEPTIDASE_A1"/>
    <property type="match status" value="1"/>
</dbReference>
<proteinExistence type="evidence at protein level"/>
<comment type="function">
    <text evidence="1">Secreted aspartic endopeptidase that allows assimilation of proteinaceous substrates. The scissile peptide bond is attacked by a nucleophilic water molecule activated by two aspartic residues in the active site. Shows a broad primary substrate specificity. Favors hydrophobic residues at the P1 and P1' positions, but also accepts a lysine residue in the P1 position, leading to the activation of trypsinogen and chymotrypsinogen A.</text>
</comment>
<comment type="catalytic activity">
    <reaction evidence="1">
        <text>Hydrolysis of proteins with broad specificity. Generally favors hydrophobic residues in P1 and P1', but also accepts Lys in P1, which leads to activation of trypsinogen. Does not clot milk.</text>
        <dbReference type="EC" id="3.4.23.18"/>
    </reaction>
</comment>
<comment type="subcellular location">
    <subcellularLocation>
        <location evidence="1">Secreted</location>
    </subcellularLocation>
</comment>
<comment type="similarity">
    <text evidence="3">Belongs to the peptidase A1 family.</text>
</comment>
<organism>
    <name type="scientific">Aspergillus niger</name>
    <dbReference type="NCBI Taxonomy" id="5061"/>
    <lineage>
        <taxon>Eukaryota</taxon>
        <taxon>Fungi</taxon>
        <taxon>Dikarya</taxon>
        <taxon>Ascomycota</taxon>
        <taxon>Pezizomycotina</taxon>
        <taxon>Eurotiomycetes</taxon>
        <taxon>Eurotiomycetidae</taxon>
        <taxon>Eurotiales</taxon>
        <taxon>Aspergillaceae</taxon>
        <taxon>Aspergillus</taxon>
        <taxon>Aspergillus subgen. Circumdati</taxon>
    </lineage>
</organism>
<feature type="signal peptide" evidence="2">
    <location>
        <begin position="1"/>
        <end position="20"/>
    </location>
</feature>
<feature type="propeptide" id="PRO_0000025920" description="Activation peptide" evidence="4">
    <location>
        <begin position="21"/>
        <end position="69"/>
    </location>
</feature>
<feature type="chain" id="PRO_0000025921" description="Aspergillopepsin-1">
    <location>
        <begin position="70"/>
        <end position="394"/>
    </location>
</feature>
<feature type="domain" description="Peptidase A1" evidence="3">
    <location>
        <begin position="85"/>
        <end position="391"/>
    </location>
</feature>
<feature type="active site" evidence="3">
    <location>
        <position position="101"/>
    </location>
</feature>
<feature type="active site" evidence="3">
    <location>
        <position position="283"/>
    </location>
</feature>
<feature type="disulfide bond" evidence="3">
    <location>
        <begin position="319"/>
        <end position="354"/>
    </location>
</feature>
<feature type="sequence conflict" description="In Ref. 2; BAA08123." evidence="7" ref="2">
    <original>T</original>
    <variation>S</variation>
    <location>
        <position position="16"/>
    </location>
</feature>
<feature type="sequence conflict" description="In Ref. 2; BAA08123." evidence="7" ref="2">
    <original>V</original>
    <variation>I</variation>
    <location>
        <position position="44"/>
    </location>
</feature>
<feature type="sequence conflict" description="In Ref. 2; BAA08123." evidence="7" ref="2">
    <original>L</original>
    <variation>M</variation>
    <location>
        <position position="49"/>
    </location>
</feature>
<feature type="sequence conflict" description="In Ref. 2; BAA08123." evidence="7" ref="2">
    <original>G</original>
    <variation>V</variation>
    <location>
        <position position="109"/>
    </location>
</feature>
<feature type="sequence conflict" description="In Ref. 2; BAA08123." evidence="7" ref="2">
    <original>S</original>
    <variation>T</variation>
    <location>
        <position position="138"/>
    </location>
</feature>
<feature type="sequence conflict" description="In Ref. 2; BAA08123." evidence="7" ref="2">
    <original>H</original>
    <variation>Y</variation>
    <location>
        <position position="299"/>
    </location>
</feature>
<feature type="sequence conflict" description="In Ref. 2; BAA08123." evidence="7" ref="2">
    <original>Y</original>
    <variation>E</variation>
    <location>
        <position position="310"/>
    </location>
</feature>
<feature type="sequence conflict" description="In Ref. 2; BAA08123." evidence="7" ref="2">
    <original>DL</original>
    <variation>NP</variation>
    <location>
        <begin position="322"/>
        <end position="323"/>
    </location>
</feature>
<feature type="sequence conflict" description="In Ref. 2; BAA08123." evidence="7" ref="2">
    <original>K</original>
    <variation>R</variation>
    <location>
        <position position="340"/>
    </location>
</feature>
<feature type="sequence conflict" description="In Ref. 2; BAA08123." evidence="7" ref="2">
    <original>V</original>
    <variation>I</variation>
    <location>
        <position position="347"/>
    </location>
</feature>
<feature type="sequence conflict" description="In Ref. 2; BAA08123." evidence="7" ref="2">
    <original>Y</original>
    <variation>F</variation>
    <location>
        <position position="355"/>
    </location>
</feature>